<comment type="function">
    <text evidence="3">Pectin methylesterase (PME) inhibitor that inhibits PME in vitro.</text>
</comment>
<comment type="subcellular location">
    <subcellularLocation>
        <location evidence="3">Secreted</location>
        <location evidence="3">Extracellular space</location>
        <location evidence="3">Apoplast</location>
    </subcellularLocation>
</comment>
<comment type="induction">
    <text evidence="3">Induced by drought and salt stresses.</text>
</comment>
<comment type="similarity">
    <text evidence="5">Belongs to the PMEI family.</text>
</comment>
<feature type="signal peptide" evidence="2">
    <location>
        <begin position="1"/>
        <end position="30"/>
    </location>
</feature>
<feature type="chain" id="PRO_5009344949" description="Pectinesterase inhibitor 8" evidence="2">
    <location>
        <begin position="31"/>
        <end position="183"/>
    </location>
</feature>
<feature type="disulfide bond" evidence="1">
    <location>
        <begin position="36"/>
        <end position="51"/>
    </location>
</feature>
<feature type="disulfide bond" evidence="1">
    <location>
        <begin position="107"/>
        <end position="147"/>
    </location>
</feature>
<name>PMEI8_ORYSJ</name>
<protein>
    <recommendedName>
        <fullName evidence="5">Pectinesterase inhibitor 8</fullName>
    </recommendedName>
    <alternativeName>
        <fullName evidence="4">Pectin methylesterase inhibitor 8</fullName>
        <shortName evidence="4">OsPMEI8</shortName>
    </alternativeName>
</protein>
<keyword id="KW-0052">Apoplast</keyword>
<keyword id="KW-1015">Disulfide bond</keyword>
<keyword id="KW-1185">Reference proteome</keyword>
<keyword id="KW-0964">Secreted</keyword>
<keyword id="KW-0732">Signal</keyword>
<organism>
    <name type="scientific">Oryza sativa subsp. japonica</name>
    <name type="common">Rice</name>
    <dbReference type="NCBI Taxonomy" id="39947"/>
    <lineage>
        <taxon>Eukaryota</taxon>
        <taxon>Viridiplantae</taxon>
        <taxon>Streptophyta</taxon>
        <taxon>Embryophyta</taxon>
        <taxon>Tracheophyta</taxon>
        <taxon>Spermatophyta</taxon>
        <taxon>Magnoliopsida</taxon>
        <taxon>Liliopsida</taxon>
        <taxon>Poales</taxon>
        <taxon>Poaceae</taxon>
        <taxon>BOP clade</taxon>
        <taxon>Oryzoideae</taxon>
        <taxon>Oryzeae</taxon>
        <taxon>Oryzinae</taxon>
        <taxon>Oryza</taxon>
        <taxon>Oryza sativa</taxon>
    </lineage>
</organism>
<gene>
    <name evidence="4" type="primary">PMEI8</name>
    <name evidence="7" type="ordered locus">Os02g0537000</name>
    <name evidence="5" type="ordered locus">LOC_Os02g33380</name>
    <name evidence="8" type="ORF">OsJ_07032</name>
    <name evidence="6" type="ORF">P0508B05.10</name>
</gene>
<proteinExistence type="evidence at transcript level"/>
<dbReference type="EMBL" id="AP004753">
    <property type="protein sequence ID" value="BAD27906.1"/>
    <property type="molecule type" value="Genomic_DNA"/>
</dbReference>
<dbReference type="EMBL" id="AP008208">
    <property type="protein sequence ID" value="BAF08959.1"/>
    <property type="molecule type" value="Genomic_DNA"/>
</dbReference>
<dbReference type="EMBL" id="AP014958">
    <property type="protein sequence ID" value="BAS79070.1"/>
    <property type="molecule type" value="Genomic_DNA"/>
</dbReference>
<dbReference type="EMBL" id="CM000139">
    <property type="protein sequence ID" value="EAZ23333.1"/>
    <property type="molecule type" value="Genomic_DNA"/>
</dbReference>
<dbReference type="EMBL" id="AK062855">
    <property type="protein sequence ID" value="BAG88470.1"/>
    <property type="molecule type" value="mRNA"/>
</dbReference>
<dbReference type="RefSeq" id="XP_015624960.1">
    <property type="nucleotide sequence ID" value="XM_015769474.1"/>
</dbReference>
<dbReference type="SMR" id="Q6ETW4"/>
<dbReference type="FunCoup" id="Q6ETW4">
    <property type="interactions" value="12"/>
</dbReference>
<dbReference type="STRING" id="39947.Q6ETW4"/>
<dbReference type="PaxDb" id="39947-Q6ETW4"/>
<dbReference type="EnsemblPlants" id="Os02t0537000-01">
    <property type="protein sequence ID" value="Os02t0537000-01"/>
    <property type="gene ID" value="Os02g0537000"/>
</dbReference>
<dbReference type="Gramene" id="Os02t0537000-01">
    <property type="protein sequence ID" value="Os02t0537000-01"/>
    <property type="gene ID" value="Os02g0537000"/>
</dbReference>
<dbReference type="KEGG" id="dosa:Os02g0537000"/>
<dbReference type="eggNOG" id="ENOG502R7SM">
    <property type="taxonomic scope" value="Eukaryota"/>
</dbReference>
<dbReference type="HOGENOM" id="CLU_033761_2_1_1"/>
<dbReference type="InParanoid" id="Q6ETW4"/>
<dbReference type="OMA" id="VEMAIVC"/>
<dbReference type="OrthoDB" id="615314at2759"/>
<dbReference type="Proteomes" id="UP000000763">
    <property type="component" value="Chromosome 2"/>
</dbReference>
<dbReference type="Proteomes" id="UP000007752">
    <property type="component" value="Chromosome 2"/>
</dbReference>
<dbReference type="Proteomes" id="UP000059680">
    <property type="component" value="Chromosome 2"/>
</dbReference>
<dbReference type="GO" id="GO:0048046">
    <property type="term" value="C:apoplast"/>
    <property type="evidence" value="ECO:0000314"/>
    <property type="project" value="UniProtKB"/>
</dbReference>
<dbReference type="GO" id="GO:0046910">
    <property type="term" value="F:pectinesterase inhibitor activity"/>
    <property type="evidence" value="ECO:0000314"/>
    <property type="project" value="UniProtKB"/>
</dbReference>
<dbReference type="Gene3D" id="1.20.140.40">
    <property type="entry name" value="Invertase/pectin methylesterase inhibitor family protein"/>
    <property type="match status" value="1"/>
</dbReference>
<dbReference type="InterPro" id="IPR035513">
    <property type="entry name" value="Invertase/methylesterase_inhib"/>
</dbReference>
<dbReference type="InterPro" id="IPR006501">
    <property type="entry name" value="Pectinesterase_inhib_dom"/>
</dbReference>
<dbReference type="NCBIfam" id="TIGR01614">
    <property type="entry name" value="PME_inhib"/>
    <property type="match status" value="1"/>
</dbReference>
<dbReference type="PANTHER" id="PTHR35357">
    <property type="entry name" value="OS02G0537100 PROTEIN"/>
    <property type="match status" value="1"/>
</dbReference>
<dbReference type="PANTHER" id="PTHR35357:SF2">
    <property type="entry name" value="PECTINESTERASE INHIBITOR 8"/>
    <property type="match status" value="1"/>
</dbReference>
<dbReference type="Pfam" id="PF04043">
    <property type="entry name" value="PMEI"/>
    <property type="match status" value="1"/>
</dbReference>
<dbReference type="SUPFAM" id="SSF101148">
    <property type="entry name" value="Plant invertase/pectin methylesterase inhibitor"/>
    <property type="match status" value="1"/>
</dbReference>
<sequence length="183" mass="18967">MAQRASRRPAAAAAAVVVAVVLAVSGGVGATPETACRAAAEEDRRVDYEFCVSRLSHHHDSPDADTWGLAKVAADVGVCIAGDAAYDAKAKLQAAKAGGEREALERCAELYDRMGSAFAAAYDDINRREYAAGKEKAGEAASLARRCDGAFADAGVAPSPLERQTAESVKIAIVCTAITNLVK</sequence>
<reference key="1">
    <citation type="journal article" date="2005" name="Nature">
        <title>The map-based sequence of the rice genome.</title>
        <authorList>
            <consortium name="International rice genome sequencing project (IRGSP)"/>
        </authorList>
    </citation>
    <scope>NUCLEOTIDE SEQUENCE [LARGE SCALE GENOMIC DNA]</scope>
    <source>
        <strain>cv. Nipponbare</strain>
    </source>
</reference>
<reference key="2">
    <citation type="journal article" date="2008" name="Nucleic Acids Res.">
        <title>The rice annotation project database (RAP-DB): 2008 update.</title>
        <authorList>
            <consortium name="The rice annotation project (RAP)"/>
        </authorList>
    </citation>
    <scope>GENOME REANNOTATION</scope>
    <source>
        <strain>cv. Nipponbare</strain>
    </source>
</reference>
<reference key="3">
    <citation type="journal article" date="2013" name="Rice">
        <title>Improvement of the Oryza sativa Nipponbare reference genome using next generation sequence and optical map data.</title>
        <authorList>
            <person name="Kawahara Y."/>
            <person name="de la Bastide M."/>
            <person name="Hamilton J.P."/>
            <person name="Kanamori H."/>
            <person name="McCombie W.R."/>
            <person name="Ouyang S."/>
            <person name="Schwartz D.C."/>
            <person name="Tanaka T."/>
            <person name="Wu J."/>
            <person name="Zhou S."/>
            <person name="Childs K.L."/>
            <person name="Davidson R.M."/>
            <person name="Lin H."/>
            <person name="Quesada-Ocampo L."/>
            <person name="Vaillancourt B."/>
            <person name="Sakai H."/>
            <person name="Lee S.S."/>
            <person name="Kim J."/>
            <person name="Numa H."/>
            <person name="Itoh T."/>
            <person name="Buell C.R."/>
            <person name="Matsumoto T."/>
        </authorList>
    </citation>
    <scope>GENOME REANNOTATION</scope>
    <source>
        <strain>cv. Nipponbare</strain>
    </source>
</reference>
<reference key="4">
    <citation type="journal article" date="2005" name="PLoS Biol.">
        <title>The genomes of Oryza sativa: a history of duplications.</title>
        <authorList>
            <person name="Yu J."/>
            <person name="Wang J."/>
            <person name="Lin W."/>
            <person name="Li S."/>
            <person name="Li H."/>
            <person name="Zhou J."/>
            <person name="Ni P."/>
            <person name="Dong W."/>
            <person name="Hu S."/>
            <person name="Zeng C."/>
            <person name="Zhang J."/>
            <person name="Zhang Y."/>
            <person name="Li R."/>
            <person name="Xu Z."/>
            <person name="Li S."/>
            <person name="Li X."/>
            <person name="Zheng H."/>
            <person name="Cong L."/>
            <person name="Lin L."/>
            <person name="Yin J."/>
            <person name="Geng J."/>
            <person name="Li G."/>
            <person name="Shi J."/>
            <person name="Liu J."/>
            <person name="Lv H."/>
            <person name="Li J."/>
            <person name="Wang J."/>
            <person name="Deng Y."/>
            <person name="Ran L."/>
            <person name="Shi X."/>
            <person name="Wang X."/>
            <person name="Wu Q."/>
            <person name="Li C."/>
            <person name="Ren X."/>
            <person name="Wang J."/>
            <person name="Wang X."/>
            <person name="Li D."/>
            <person name="Liu D."/>
            <person name="Zhang X."/>
            <person name="Ji Z."/>
            <person name="Zhao W."/>
            <person name="Sun Y."/>
            <person name="Zhang Z."/>
            <person name="Bao J."/>
            <person name="Han Y."/>
            <person name="Dong L."/>
            <person name="Ji J."/>
            <person name="Chen P."/>
            <person name="Wu S."/>
            <person name="Liu J."/>
            <person name="Xiao Y."/>
            <person name="Bu D."/>
            <person name="Tan J."/>
            <person name="Yang L."/>
            <person name="Ye C."/>
            <person name="Zhang J."/>
            <person name="Xu J."/>
            <person name="Zhou Y."/>
            <person name="Yu Y."/>
            <person name="Zhang B."/>
            <person name="Zhuang S."/>
            <person name="Wei H."/>
            <person name="Liu B."/>
            <person name="Lei M."/>
            <person name="Yu H."/>
            <person name="Li Y."/>
            <person name="Xu H."/>
            <person name="Wei S."/>
            <person name="He X."/>
            <person name="Fang L."/>
            <person name="Zhang Z."/>
            <person name="Zhang Y."/>
            <person name="Huang X."/>
            <person name="Su Z."/>
            <person name="Tong W."/>
            <person name="Li J."/>
            <person name="Tong Z."/>
            <person name="Li S."/>
            <person name="Ye J."/>
            <person name="Wang L."/>
            <person name="Fang L."/>
            <person name="Lei T."/>
            <person name="Chen C.-S."/>
            <person name="Chen H.-C."/>
            <person name="Xu Z."/>
            <person name="Li H."/>
            <person name="Huang H."/>
            <person name="Zhang F."/>
            <person name="Xu H."/>
            <person name="Li N."/>
            <person name="Zhao C."/>
            <person name="Li S."/>
            <person name="Dong L."/>
            <person name="Huang Y."/>
            <person name="Li L."/>
            <person name="Xi Y."/>
            <person name="Qi Q."/>
            <person name="Li W."/>
            <person name="Zhang B."/>
            <person name="Hu W."/>
            <person name="Zhang Y."/>
            <person name="Tian X."/>
            <person name="Jiao Y."/>
            <person name="Liang X."/>
            <person name="Jin J."/>
            <person name="Gao L."/>
            <person name="Zheng W."/>
            <person name="Hao B."/>
            <person name="Liu S.-M."/>
            <person name="Wang W."/>
            <person name="Yuan L."/>
            <person name="Cao M."/>
            <person name="McDermott J."/>
            <person name="Samudrala R."/>
            <person name="Wang J."/>
            <person name="Wong G.K.-S."/>
            <person name="Yang H."/>
        </authorList>
    </citation>
    <scope>NUCLEOTIDE SEQUENCE [LARGE SCALE GENOMIC DNA]</scope>
    <source>
        <strain>cv. Nipponbare</strain>
    </source>
</reference>
<reference key="5">
    <citation type="journal article" date="2003" name="Science">
        <title>Collection, mapping, and annotation of over 28,000 cDNA clones from japonica rice.</title>
        <authorList>
            <consortium name="The rice full-length cDNA consortium"/>
        </authorList>
    </citation>
    <scope>NUCLEOTIDE SEQUENCE [LARGE SCALE MRNA]</scope>
    <source>
        <strain>cv. Nipponbare</strain>
    </source>
</reference>
<reference key="6">
    <citation type="journal article" date="2016" name="Plant Physiol. Biochem.">
        <title>Molecular and biochemical characterization of rice pectin methylesterase inhibitors (OsPMEIs).</title>
        <authorList>
            <person name="Nguyen H.P."/>
            <person name="Jeong H.Y."/>
            <person name="Kim H."/>
            <person name="Kim Y.C."/>
            <person name="Lee C."/>
        </authorList>
    </citation>
    <scope>FUNCTION</scope>
    <scope>SUBCELLULAR LOCATION</scope>
    <scope>INDUCTION</scope>
    <scope>GENE FAMILY</scope>
    <scope>NOMENCLATURE</scope>
</reference>
<accession>Q6ETW4</accession>
<evidence type="ECO:0000250" key="1">
    <source>
        <dbReference type="UniProtKB" id="Q9LNF2"/>
    </source>
</evidence>
<evidence type="ECO:0000255" key="2"/>
<evidence type="ECO:0000269" key="3">
    <source>
    </source>
</evidence>
<evidence type="ECO:0000303" key="4">
    <source>
    </source>
</evidence>
<evidence type="ECO:0000305" key="5"/>
<evidence type="ECO:0000312" key="6">
    <source>
        <dbReference type="EMBL" id="BAD27906.1"/>
    </source>
</evidence>
<evidence type="ECO:0000312" key="7">
    <source>
        <dbReference type="EMBL" id="BAF08959.1"/>
    </source>
</evidence>
<evidence type="ECO:0000312" key="8">
    <source>
        <dbReference type="EMBL" id="EAZ23333.1"/>
    </source>
</evidence>